<feature type="chain" id="PRO_0000376673" description="2,3,4,5-tetrahydropyridine-2,6-dicarboxylate N-acetyltransferase">
    <location>
        <begin position="1"/>
        <end position="256"/>
    </location>
</feature>
<sequence>MEAQKLSAQEIIQFIGNAEKKTRVKVTLSGMPSFKAAGFLAENGRPNFKALANKGIQVLGDFHTHYSLKIIIGDWQAVRPLLSGLTENKDYTLELEGRNSAVPLLDTREINARIEPGAIIRDQVTIGDSAVIMMGAIINIGAEIGEGTMIDMGAILGGRATVGKNSHIGAGAVLAGVIEPASAEPVRVGDNVLVGANAVVIEGVQVGSGSVVAAGAIVTQDVPENVVVAGVPARIIKEIDEKTQQKTALEDALRNL</sequence>
<keyword id="KW-0012">Acyltransferase</keyword>
<keyword id="KW-0028">Amino-acid biosynthesis</keyword>
<keyword id="KW-0220">Diaminopimelate biosynthesis</keyword>
<keyword id="KW-0457">Lysine biosynthesis</keyword>
<keyword id="KW-1185">Reference proteome</keyword>
<keyword id="KW-0677">Repeat</keyword>
<keyword id="KW-0808">Transferase</keyword>
<accession>Q9CIS5</accession>
<organism>
    <name type="scientific">Lactococcus lactis subsp. lactis (strain IL1403)</name>
    <name type="common">Streptococcus lactis</name>
    <dbReference type="NCBI Taxonomy" id="272623"/>
    <lineage>
        <taxon>Bacteria</taxon>
        <taxon>Bacillati</taxon>
        <taxon>Bacillota</taxon>
        <taxon>Bacilli</taxon>
        <taxon>Lactobacillales</taxon>
        <taxon>Streptococcaceae</taxon>
        <taxon>Lactococcus</taxon>
    </lineage>
</organism>
<proteinExistence type="inferred from homology"/>
<protein>
    <recommendedName>
        <fullName evidence="1">2,3,4,5-tetrahydropyridine-2,6-dicarboxylate N-acetyltransferase</fullName>
        <ecNumber evidence="1">2.3.1.89</ecNumber>
    </recommendedName>
    <alternativeName>
        <fullName evidence="1">Tetrahydrodipicolinate N-acetyltransferase</fullName>
        <shortName evidence="1">THP acetyltransferase</shortName>
        <shortName evidence="1">Tetrahydropicolinate acetylase</shortName>
    </alternativeName>
</protein>
<gene>
    <name evidence="1" type="primary">dapH</name>
    <name type="synonym">ychH</name>
    <name type="ordered locus">LL0281</name>
    <name type="ORF">L79267</name>
</gene>
<evidence type="ECO:0000255" key="1">
    <source>
        <dbReference type="HAMAP-Rule" id="MF_01691"/>
    </source>
</evidence>
<dbReference type="EC" id="2.3.1.89" evidence="1"/>
<dbReference type="EMBL" id="AE005176">
    <property type="protein sequence ID" value="AAK04379.1"/>
    <property type="molecule type" value="Genomic_DNA"/>
</dbReference>
<dbReference type="PIR" id="A86660">
    <property type="entry name" value="A86660"/>
</dbReference>
<dbReference type="RefSeq" id="NP_266437.1">
    <property type="nucleotide sequence ID" value="NC_002662.1"/>
</dbReference>
<dbReference type="SMR" id="Q9CIS5"/>
<dbReference type="PaxDb" id="272623-L79267"/>
<dbReference type="EnsemblBacteria" id="AAK04379">
    <property type="protein sequence ID" value="AAK04379"/>
    <property type="gene ID" value="L79267"/>
</dbReference>
<dbReference type="KEGG" id="lla:L79267"/>
<dbReference type="PATRIC" id="fig|272623.7.peg.308"/>
<dbReference type="eggNOG" id="COG2171">
    <property type="taxonomic scope" value="Bacteria"/>
</dbReference>
<dbReference type="HOGENOM" id="CLU_103751_0_0_9"/>
<dbReference type="OrthoDB" id="9788080at2"/>
<dbReference type="UniPathway" id="UPA00034">
    <property type="reaction ID" value="UER00022"/>
</dbReference>
<dbReference type="Proteomes" id="UP000002196">
    <property type="component" value="Chromosome"/>
</dbReference>
<dbReference type="GO" id="GO:0047200">
    <property type="term" value="F:tetrahydrodipicolinate N-acetyltransferase activity"/>
    <property type="evidence" value="ECO:0007669"/>
    <property type="project" value="UniProtKB-EC"/>
</dbReference>
<dbReference type="GO" id="GO:0019877">
    <property type="term" value="P:diaminopimelate biosynthetic process"/>
    <property type="evidence" value="ECO:0007669"/>
    <property type="project" value="UniProtKB-UniRule"/>
</dbReference>
<dbReference type="GO" id="GO:0009089">
    <property type="term" value="P:lysine biosynthetic process via diaminopimelate"/>
    <property type="evidence" value="ECO:0007669"/>
    <property type="project" value="UniProtKB-UniRule"/>
</dbReference>
<dbReference type="CDD" id="cd03350">
    <property type="entry name" value="LbH_THP_succinylT"/>
    <property type="match status" value="1"/>
</dbReference>
<dbReference type="Gene3D" id="2.160.10.10">
    <property type="entry name" value="Hexapeptide repeat proteins"/>
    <property type="match status" value="1"/>
</dbReference>
<dbReference type="Gene3D" id="3.30.70.250">
    <property type="entry name" value="Malonyl-CoA ACP transacylase, ACP-binding"/>
    <property type="match status" value="1"/>
</dbReference>
<dbReference type="HAMAP" id="MF_01691">
    <property type="entry name" value="DapH"/>
    <property type="match status" value="1"/>
</dbReference>
<dbReference type="InterPro" id="IPR019873">
    <property type="entry name" value="DapH"/>
</dbReference>
<dbReference type="InterPro" id="IPR013710">
    <property type="entry name" value="DapH_N"/>
</dbReference>
<dbReference type="InterPro" id="IPR001451">
    <property type="entry name" value="Hexapep"/>
</dbReference>
<dbReference type="InterPro" id="IPR018357">
    <property type="entry name" value="Hexapep_transf_CS"/>
</dbReference>
<dbReference type="InterPro" id="IPR050179">
    <property type="entry name" value="Trans_hexapeptide_repeat"/>
</dbReference>
<dbReference type="InterPro" id="IPR011004">
    <property type="entry name" value="Trimer_LpxA-like_sf"/>
</dbReference>
<dbReference type="NCBIfam" id="TIGR03532">
    <property type="entry name" value="DapD_Ac"/>
    <property type="match status" value="1"/>
</dbReference>
<dbReference type="PANTHER" id="PTHR43300:SF10">
    <property type="entry name" value="2,3,4,5-TETRAHYDROPYRIDINE-2,6-DICARBOXYLATE N-ACETYLTRANSFERASE"/>
    <property type="match status" value="1"/>
</dbReference>
<dbReference type="PANTHER" id="PTHR43300">
    <property type="entry name" value="ACETYLTRANSFERASE"/>
    <property type="match status" value="1"/>
</dbReference>
<dbReference type="Pfam" id="PF08503">
    <property type="entry name" value="DapH_N"/>
    <property type="match status" value="1"/>
</dbReference>
<dbReference type="Pfam" id="PF00132">
    <property type="entry name" value="Hexapep"/>
    <property type="match status" value="1"/>
</dbReference>
<dbReference type="Pfam" id="PF14602">
    <property type="entry name" value="Hexapep_2"/>
    <property type="match status" value="1"/>
</dbReference>
<dbReference type="SUPFAM" id="SSF51161">
    <property type="entry name" value="Trimeric LpxA-like enzymes"/>
    <property type="match status" value="1"/>
</dbReference>
<dbReference type="PROSITE" id="PS00101">
    <property type="entry name" value="HEXAPEP_TRANSFERASES"/>
    <property type="match status" value="2"/>
</dbReference>
<name>DAPH_LACLA</name>
<reference key="1">
    <citation type="journal article" date="2001" name="Genome Res.">
        <title>The complete genome sequence of the lactic acid bacterium Lactococcus lactis ssp. lactis IL1403.</title>
        <authorList>
            <person name="Bolotin A."/>
            <person name="Wincker P."/>
            <person name="Mauger S."/>
            <person name="Jaillon O."/>
            <person name="Malarme K."/>
            <person name="Weissenbach J."/>
            <person name="Ehrlich S.D."/>
            <person name="Sorokin A."/>
        </authorList>
    </citation>
    <scope>NUCLEOTIDE SEQUENCE [LARGE SCALE GENOMIC DNA]</scope>
    <source>
        <strain>IL1403</strain>
    </source>
</reference>
<comment type="function">
    <text evidence="1">Catalyzes the transfer of an acetyl group from acetyl-CoA to tetrahydrodipicolinate.</text>
</comment>
<comment type="catalytic activity">
    <reaction evidence="1">
        <text>(S)-2,3,4,5-tetrahydrodipicolinate + acetyl-CoA + H2O = L-2-acetamido-6-oxoheptanedioate + CoA</text>
        <dbReference type="Rhea" id="RHEA:13085"/>
        <dbReference type="ChEBI" id="CHEBI:15377"/>
        <dbReference type="ChEBI" id="CHEBI:16845"/>
        <dbReference type="ChEBI" id="CHEBI:57287"/>
        <dbReference type="ChEBI" id="CHEBI:57288"/>
        <dbReference type="ChEBI" id="CHEBI:58117"/>
        <dbReference type="EC" id="2.3.1.89"/>
    </reaction>
</comment>
<comment type="pathway">
    <text evidence="1">Amino-acid biosynthesis; L-lysine biosynthesis via DAP pathway; LL-2,6-diaminopimelate from (S)-tetrahydrodipicolinate (acetylase route): step 1/3.</text>
</comment>
<comment type="similarity">
    <text evidence="1">Belongs to the transferase hexapeptide repeat family. DapH subfamily.</text>
</comment>